<reference key="1">
    <citation type="journal article" date="1998" name="J. Bacteriol.">
        <title>Evolutionary relationship between chlorocatechol catabolic enzymes from Rhodococcus opacus 1CP and their counterparts in proteobacteria: sequence divergence and functional convergence.</title>
        <authorList>
            <person name="Eulberg D."/>
            <person name="Kourbatova E.M."/>
            <person name="Golovleva L.A."/>
            <person name="Schloemann M."/>
        </authorList>
    </citation>
    <scope>NUCLEOTIDE SEQUENCE [GENOMIC DNA]</scope>
    <source>
        <strain>1CP</strain>
    </source>
</reference>
<feature type="chain" id="PRO_0000085088" description="Chlorocatechol 1,2-dioxygenase">
    <location>
        <begin position="1"/>
        <end position="257"/>
    </location>
</feature>
<feature type="binding site" evidence="1">
    <location>
        <position position="134"/>
    </location>
    <ligand>
        <name>Fe cation</name>
        <dbReference type="ChEBI" id="CHEBI:24875"/>
    </ligand>
</feature>
<feature type="binding site" evidence="1">
    <location>
        <position position="169"/>
    </location>
    <ligand>
        <name>Fe cation</name>
        <dbReference type="ChEBI" id="CHEBI:24875"/>
    </ligand>
</feature>
<feature type="binding site" evidence="1">
    <location>
        <position position="194"/>
    </location>
    <ligand>
        <name>Fe cation</name>
        <dbReference type="ChEBI" id="CHEBI:24875"/>
    </ligand>
</feature>
<feature type="binding site" evidence="1">
    <location>
        <position position="196"/>
    </location>
    <ligand>
        <name>Fe cation</name>
        <dbReference type="ChEBI" id="CHEBI:24875"/>
    </ligand>
</feature>
<feature type="helix" evidence="3">
    <location>
        <begin position="4"/>
        <end position="24"/>
    </location>
</feature>
<feature type="helix" evidence="3">
    <location>
        <begin position="28"/>
        <end position="43"/>
    </location>
</feature>
<feature type="helix" evidence="3">
    <location>
        <begin position="47"/>
        <end position="64"/>
    </location>
</feature>
<feature type="strand" evidence="3">
    <location>
        <begin position="67"/>
        <end position="69"/>
    </location>
</feature>
<feature type="strand" evidence="3">
    <location>
        <begin position="88"/>
        <end position="90"/>
    </location>
</feature>
<feature type="strand" evidence="3">
    <location>
        <begin position="103"/>
        <end position="111"/>
    </location>
</feature>
<feature type="strand" evidence="3">
    <location>
        <begin position="122"/>
        <end position="126"/>
    </location>
</feature>
<feature type="turn" evidence="4">
    <location>
        <begin position="135"/>
        <end position="137"/>
    </location>
</feature>
<feature type="strand" evidence="4">
    <location>
        <begin position="139"/>
        <end position="141"/>
    </location>
</feature>
<feature type="strand" evidence="3">
    <location>
        <begin position="148"/>
        <end position="151"/>
    </location>
</feature>
<feature type="strand" evidence="3">
    <location>
        <begin position="157"/>
        <end position="164"/>
    </location>
</feature>
<feature type="helix" evidence="3">
    <location>
        <begin position="176"/>
        <end position="182"/>
    </location>
</feature>
<feature type="turn" evidence="3">
    <location>
        <begin position="183"/>
        <end position="185"/>
    </location>
</feature>
<feature type="strand" evidence="3">
    <location>
        <begin position="195"/>
        <end position="200"/>
    </location>
</feature>
<feature type="strand" evidence="3">
    <location>
        <begin position="207"/>
        <end position="213"/>
    </location>
</feature>
<feature type="turn" evidence="3">
    <location>
        <begin position="217"/>
        <end position="220"/>
    </location>
</feature>
<feature type="helix" evidence="3">
    <location>
        <begin position="229"/>
        <end position="231"/>
    </location>
</feature>
<feature type="strand" evidence="3">
    <location>
        <begin position="236"/>
        <end position="240"/>
    </location>
</feature>
<feature type="strand" evidence="3">
    <location>
        <begin position="243"/>
        <end position="253"/>
    </location>
</feature>
<accession>O67987</accession>
<dbReference type="EC" id="1.13.11.-"/>
<dbReference type="EMBL" id="AF003948">
    <property type="protein sequence ID" value="AAC38251.1"/>
    <property type="molecule type" value="Genomic_DNA"/>
</dbReference>
<dbReference type="RefSeq" id="WP_065493674.1">
    <property type="nucleotide sequence ID" value="NZ_CP009112.1"/>
</dbReference>
<dbReference type="PDB" id="1S9A">
    <property type="method" value="X-ray"/>
    <property type="resolution" value="2.47 A"/>
    <property type="chains" value="A/B=1-257"/>
</dbReference>
<dbReference type="PDB" id="3O32">
    <property type="method" value="X-ray"/>
    <property type="resolution" value="2.85 A"/>
    <property type="chains" value="A/B=1-257"/>
</dbReference>
<dbReference type="PDB" id="3O5U">
    <property type="method" value="X-ray"/>
    <property type="resolution" value="2.35 A"/>
    <property type="chains" value="A/B=1-257"/>
</dbReference>
<dbReference type="PDB" id="3O6J">
    <property type="method" value="X-ray"/>
    <property type="resolution" value="2.90 A"/>
    <property type="chains" value="A/B=1-257"/>
</dbReference>
<dbReference type="PDB" id="3O6R">
    <property type="method" value="X-ray"/>
    <property type="resolution" value="2.60 A"/>
    <property type="chains" value="A/B=1-257"/>
</dbReference>
<dbReference type="PDBsum" id="1S9A"/>
<dbReference type="PDBsum" id="3O32"/>
<dbReference type="PDBsum" id="3O5U"/>
<dbReference type="PDBsum" id="3O6J"/>
<dbReference type="PDBsum" id="3O6R"/>
<dbReference type="SMR" id="O67987"/>
<dbReference type="DrugBank" id="DB03793">
    <property type="generic name" value="Benzoic acid"/>
</dbReference>
<dbReference type="DrugBank" id="DB04237">
    <property type="generic name" value="Tris(Hydroxyethyl)Aminomethane"/>
</dbReference>
<dbReference type="BRENDA" id="1.13.11.1">
    <property type="organism ID" value="4353"/>
</dbReference>
<dbReference type="EvolutionaryTrace" id="O67987"/>
<dbReference type="GO" id="GO:0018576">
    <property type="term" value="F:catechol 1,2-dioxygenase activity"/>
    <property type="evidence" value="ECO:0007669"/>
    <property type="project" value="InterPro"/>
</dbReference>
<dbReference type="GO" id="GO:0008199">
    <property type="term" value="F:ferric iron binding"/>
    <property type="evidence" value="ECO:0007669"/>
    <property type="project" value="InterPro"/>
</dbReference>
<dbReference type="GO" id="GO:0009056">
    <property type="term" value="P:catabolic process"/>
    <property type="evidence" value="ECO:0007669"/>
    <property type="project" value="UniProtKB-KW"/>
</dbReference>
<dbReference type="GO" id="GO:0009712">
    <property type="term" value="P:catechol-containing compound metabolic process"/>
    <property type="evidence" value="ECO:0007669"/>
    <property type="project" value="InterPro"/>
</dbReference>
<dbReference type="CDD" id="cd03462">
    <property type="entry name" value="1_2-CCD"/>
    <property type="match status" value="1"/>
</dbReference>
<dbReference type="Gene3D" id="2.60.130.10">
    <property type="entry name" value="Aromatic compound dioxygenase"/>
    <property type="match status" value="1"/>
</dbReference>
<dbReference type="InterPro" id="IPR007535">
    <property type="entry name" value="Catechol_dOase_N"/>
</dbReference>
<dbReference type="InterPro" id="IPR012817">
    <property type="entry name" value="Chlorcchol_dOase"/>
</dbReference>
<dbReference type="InterPro" id="IPR000627">
    <property type="entry name" value="Intradiol_dOase_C"/>
</dbReference>
<dbReference type="InterPro" id="IPR015889">
    <property type="entry name" value="Intradiol_dOase_core"/>
</dbReference>
<dbReference type="InterPro" id="IPR050770">
    <property type="entry name" value="Intradiol_RC_Dioxygenase"/>
</dbReference>
<dbReference type="NCBIfam" id="TIGR02465">
    <property type="entry name" value="chlorocat_1_2"/>
    <property type="match status" value="1"/>
</dbReference>
<dbReference type="PANTHER" id="PTHR33711">
    <property type="entry name" value="DIOXYGENASE, PUTATIVE (AFU_ORTHOLOGUE AFUA_2G02910)-RELATED"/>
    <property type="match status" value="1"/>
</dbReference>
<dbReference type="PANTHER" id="PTHR33711:SF7">
    <property type="entry name" value="INTRADIOL RING-CLEAVAGE DIOXYGENASES DOMAIN-CONTAINING PROTEIN-RELATED"/>
    <property type="match status" value="1"/>
</dbReference>
<dbReference type="Pfam" id="PF00775">
    <property type="entry name" value="Dioxygenase_C"/>
    <property type="match status" value="1"/>
</dbReference>
<dbReference type="Pfam" id="PF04444">
    <property type="entry name" value="Dioxygenase_N"/>
    <property type="match status" value="1"/>
</dbReference>
<dbReference type="SUPFAM" id="SSF49482">
    <property type="entry name" value="Aromatic compound dioxygenase"/>
    <property type="match status" value="1"/>
</dbReference>
<dbReference type="PROSITE" id="PS00083">
    <property type="entry name" value="INTRADIOL_DIOXYGENAS"/>
    <property type="match status" value="1"/>
</dbReference>
<keyword id="KW-0002">3D-structure</keyword>
<keyword id="KW-0058">Aromatic hydrocarbons catabolism</keyword>
<keyword id="KW-0223">Dioxygenase</keyword>
<keyword id="KW-0408">Iron</keyword>
<keyword id="KW-0479">Metal-binding</keyword>
<keyword id="KW-0560">Oxidoreductase</keyword>
<organism>
    <name type="scientific">Rhodococcus opacus</name>
    <name type="common">Nocardia opaca</name>
    <dbReference type="NCBI Taxonomy" id="37919"/>
    <lineage>
        <taxon>Bacteria</taxon>
        <taxon>Bacillati</taxon>
        <taxon>Actinomycetota</taxon>
        <taxon>Actinomycetes</taxon>
        <taxon>Mycobacteriales</taxon>
        <taxon>Nocardiaceae</taxon>
        <taxon>Rhodococcus</taxon>
    </lineage>
</organism>
<gene>
    <name type="primary">clcA</name>
</gene>
<name>CLCA_RHOOP</name>
<protein>
    <recommendedName>
        <fullName>Chlorocatechol 1,2-dioxygenase</fullName>
        <ecNumber>1.13.11.-</ecNumber>
    </recommendedName>
</protein>
<proteinExistence type="evidence at protein level"/>
<sequence>MANTRVIELFDEFTDLIRDFIVRHEITTPEYETIMQYMISVGEAGEWPLWLDAFFETTVDSVSYGKGNWTSSAIQGPFFKEGAPLLTGKPATLPMRADEPGDRMRFTGSVRDTSGTPITGAVIDVWHSTNDGNYSFFSPALPDQYLLRGRVVPAEDGSIEFHSIRPVPYEIPKAGPTGQLMNSYLGRHSWRPAHIHIRITADGYRPLITQLYFEGDPYLDSDSCSAVKSELVLPVNKIDIDGETWQLVDFNFILQHN</sequence>
<evidence type="ECO:0000250" key="1"/>
<evidence type="ECO:0000305" key="2"/>
<evidence type="ECO:0007829" key="3">
    <source>
        <dbReference type="PDB" id="3O5U"/>
    </source>
</evidence>
<evidence type="ECO:0007829" key="4">
    <source>
        <dbReference type="PDB" id="3O6R"/>
    </source>
</evidence>
<comment type="catalytic activity">
    <reaction>
        <text>4-chlorocatechol + O2 = 3-chloro-cis,cis-muconate + 2 H(+)</text>
        <dbReference type="Rhea" id="RHEA:48576"/>
        <dbReference type="ChEBI" id="CHEBI:15378"/>
        <dbReference type="ChEBI" id="CHEBI:15379"/>
        <dbReference type="ChEBI" id="CHEBI:17589"/>
        <dbReference type="ChEBI" id="CHEBI:27772"/>
    </reaction>
</comment>
<comment type="catalytic activity">
    <reaction>
        <text>3,5-dichlorocatechol + O2 = (2E,4E)-2,4-dichloromuconate + 2 H(+)</text>
        <dbReference type="Rhea" id="RHEA:48572"/>
        <dbReference type="ChEBI" id="CHEBI:11438"/>
        <dbReference type="ChEBI" id="CHEBI:15378"/>
        <dbReference type="ChEBI" id="CHEBI:15379"/>
        <dbReference type="ChEBI" id="CHEBI:15788"/>
    </reaction>
</comment>
<comment type="cofactor">
    <cofactor>
        <name>Fe(3+)</name>
        <dbReference type="ChEBI" id="CHEBI:29034"/>
    </cofactor>
    <text>Binds 1 Fe(3+) ion per subunit.</text>
</comment>
<comment type="similarity">
    <text evidence="2">Belongs to the intradiol ring-cleavage dioxygenase family.</text>
</comment>